<proteinExistence type="evidence at transcript level"/>
<organism>
    <name type="scientific">Neosartorya fischeri (strain ATCC 1020 / DSM 3700 / CBS 544.65 / FGSC A1164 / JCM 1740 / NRRL 181 / WB 181)</name>
    <name type="common">Aspergillus fischerianus</name>
    <dbReference type="NCBI Taxonomy" id="331117"/>
    <lineage>
        <taxon>Eukaryota</taxon>
        <taxon>Fungi</taxon>
        <taxon>Dikarya</taxon>
        <taxon>Ascomycota</taxon>
        <taxon>Pezizomycotina</taxon>
        <taxon>Eurotiomycetes</taxon>
        <taxon>Eurotiomycetidae</taxon>
        <taxon>Eurotiales</taxon>
        <taxon>Aspergillaceae</taxon>
        <taxon>Aspergillus</taxon>
        <taxon>Aspergillus subgen. Fumigati</taxon>
    </lineage>
</organism>
<gene>
    <name type="primary">alp1</name>
    <name type="synonym">alk1</name>
    <name type="synonym">alp</name>
    <name type="ORF">NFIA_104430</name>
</gene>
<comment type="function">
    <text evidence="1">Secreted alkaline protease that allows assimilation of proteinaceous substrates.</text>
</comment>
<comment type="catalytic activity">
    <reaction>
        <text>Hydrolysis of proteins with broad specificity, and of Bz-Arg-OEt &gt; Ac-Tyr-OEt. Does not hydrolyze peptide amides.</text>
        <dbReference type="EC" id="3.4.21.63"/>
    </reaction>
</comment>
<comment type="subcellular location">
    <subcellularLocation>
        <location evidence="1">Secreted</location>
    </subcellularLocation>
</comment>
<comment type="induction">
    <text>Highly expressied on medium lacking a nitrogen, carbon or sulfur source.</text>
</comment>
<comment type="similarity">
    <text evidence="4">Belongs to the peptidase S8 family.</text>
</comment>
<evidence type="ECO:0000250" key="1"/>
<evidence type="ECO:0000255" key="2"/>
<evidence type="ECO:0000255" key="3">
    <source>
        <dbReference type="PROSITE-ProRule" id="PRU01240"/>
    </source>
</evidence>
<evidence type="ECO:0000305" key="4"/>
<dbReference type="EC" id="3.4.21.63"/>
<dbReference type="EMBL" id="DS027685">
    <property type="protein sequence ID" value="EAW24955.1"/>
    <property type="molecule type" value="Genomic_DNA"/>
</dbReference>
<dbReference type="RefSeq" id="XP_001266852.1">
    <property type="nucleotide sequence ID" value="XM_001266851.1"/>
</dbReference>
<dbReference type="SMR" id="A1CWF3"/>
<dbReference type="STRING" id="331117.A1CWF3"/>
<dbReference type="MEROPS" id="S08.053"/>
<dbReference type="GlyCosmos" id="A1CWF3">
    <property type="glycosylation" value="2 sites, No reported glycans"/>
</dbReference>
<dbReference type="EnsemblFungi" id="EAW24955">
    <property type="protein sequence ID" value="EAW24955"/>
    <property type="gene ID" value="NFIA_104430"/>
</dbReference>
<dbReference type="GeneID" id="4594003"/>
<dbReference type="KEGG" id="nfi:NFIA_104430"/>
<dbReference type="VEuPathDB" id="FungiDB:NFIA_104430"/>
<dbReference type="eggNOG" id="KOG1153">
    <property type="taxonomic scope" value="Eukaryota"/>
</dbReference>
<dbReference type="HOGENOM" id="CLU_011263_1_4_1"/>
<dbReference type="OMA" id="KYGFHGY"/>
<dbReference type="OrthoDB" id="206201at2759"/>
<dbReference type="Proteomes" id="UP000006702">
    <property type="component" value="Unassembled WGS sequence"/>
</dbReference>
<dbReference type="GO" id="GO:0005576">
    <property type="term" value="C:extracellular region"/>
    <property type="evidence" value="ECO:0007669"/>
    <property type="project" value="UniProtKB-SubCell"/>
</dbReference>
<dbReference type="GO" id="GO:0004252">
    <property type="term" value="F:serine-type endopeptidase activity"/>
    <property type="evidence" value="ECO:0007669"/>
    <property type="project" value="InterPro"/>
</dbReference>
<dbReference type="GO" id="GO:0006508">
    <property type="term" value="P:proteolysis"/>
    <property type="evidence" value="ECO:0007669"/>
    <property type="project" value="UniProtKB-KW"/>
</dbReference>
<dbReference type="CDD" id="cd04077">
    <property type="entry name" value="Peptidases_S8_PCSK9_ProteinaseK_like"/>
    <property type="match status" value="1"/>
</dbReference>
<dbReference type="FunFam" id="3.30.70.80:FF:000008">
    <property type="entry name" value="Alkaline protease 1"/>
    <property type="match status" value="1"/>
</dbReference>
<dbReference type="FunFam" id="3.40.50.200:FF:000014">
    <property type="entry name" value="Proteinase K"/>
    <property type="match status" value="1"/>
</dbReference>
<dbReference type="Gene3D" id="3.30.70.80">
    <property type="entry name" value="Peptidase S8 propeptide/proteinase inhibitor I9"/>
    <property type="match status" value="1"/>
</dbReference>
<dbReference type="Gene3D" id="3.40.50.200">
    <property type="entry name" value="Peptidase S8/S53 domain"/>
    <property type="match status" value="1"/>
</dbReference>
<dbReference type="InterPro" id="IPR034193">
    <property type="entry name" value="PCSK9_ProteinaseK-like"/>
</dbReference>
<dbReference type="InterPro" id="IPR000209">
    <property type="entry name" value="Peptidase_S8/S53_dom"/>
</dbReference>
<dbReference type="InterPro" id="IPR036852">
    <property type="entry name" value="Peptidase_S8/S53_dom_sf"/>
</dbReference>
<dbReference type="InterPro" id="IPR023827">
    <property type="entry name" value="Peptidase_S8_Asp-AS"/>
</dbReference>
<dbReference type="InterPro" id="IPR022398">
    <property type="entry name" value="Peptidase_S8_His-AS"/>
</dbReference>
<dbReference type="InterPro" id="IPR023828">
    <property type="entry name" value="Peptidase_S8_Ser-AS"/>
</dbReference>
<dbReference type="InterPro" id="IPR050131">
    <property type="entry name" value="Peptidase_S8_subtilisin-like"/>
</dbReference>
<dbReference type="InterPro" id="IPR015500">
    <property type="entry name" value="Peptidase_S8_subtilisin-rel"/>
</dbReference>
<dbReference type="InterPro" id="IPR010259">
    <property type="entry name" value="S8pro/Inhibitor_I9"/>
</dbReference>
<dbReference type="InterPro" id="IPR037045">
    <property type="entry name" value="S8pro/Inhibitor_I9_sf"/>
</dbReference>
<dbReference type="PANTHER" id="PTHR43806:SF58">
    <property type="entry name" value="ALKALINE PROTEASE 1-RELATED"/>
    <property type="match status" value="1"/>
</dbReference>
<dbReference type="PANTHER" id="PTHR43806">
    <property type="entry name" value="PEPTIDASE S8"/>
    <property type="match status" value="1"/>
</dbReference>
<dbReference type="Pfam" id="PF05922">
    <property type="entry name" value="Inhibitor_I9"/>
    <property type="match status" value="1"/>
</dbReference>
<dbReference type="Pfam" id="PF00082">
    <property type="entry name" value="Peptidase_S8"/>
    <property type="match status" value="1"/>
</dbReference>
<dbReference type="PRINTS" id="PR00723">
    <property type="entry name" value="SUBTILISIN"/>
</dbReference>
<dbReference type="SUPFAM" id="SSF54897">
    <property type="entry name" value="Protease propeptides/inhibitors"/>
    <property type="match status" value="1"/>
</dbReference>
<dbReference type="SUPFAM" id="SSF52743">
    <property type="entry name" value="Subtilisin-like"/>
    <property type="match status" value="1"/>
</dbReference>
<dbReference type="PROSITE" id="PS51892">
    <property type="entry name" value="SUBTILASE"/>
    <property type="match status" value="1"/>
</dbReference>
<dbReference type="PROSITE" id="PS00136">
    <property type="entry name" value="SUBTILASE_ASP"/>
    <property type="match status" value="1"/>
</dbReference>
<dbReference type="PROSITE" id="PS00137">
    <property type="entry name" value="SUBTILASE_HIS"/>
    <property type="match status" value="1"/>
</dbReference>
<dbReference type="PROSITE" id="PS00138">
    <property type="entry name" value="SUBTILASE_SER"/>
    <property type="match status" value="1"/>
</dbReference>
<sequence length="403" mass="42186">MLSIKRTLLLLGAVLPAVFGAPVQETRRAAQKIPGKYIVTFKPGTDAATIESHTLWATDLHKRNLERRDATSGEPPIGIEKNYKIKDFAAYAGSFDDTTIEEIRKSADVAHVEEDQIWYIDALTTQKGAPWGLGSISHKGQASTDYIYDTSAGAGTYAYVVDTGINVNHVEFEGRASLAYNAAGGSHVDSVGHGTHVAGTIGGKTYGVAKKTNLLSVKVFQGESSSTSIILDGFNWAANDIVSKGRTRKAAINMSLGGGYSYAFNNAVENAFDEGVLSVVAAGNENTDASNTSPASAPNALTVAAINRSNARASFSNYGSVVDIFAPGQDILSAWIGSNTATNTISGTSMATPHIVGLSVYLMGLESLSGPAAVTSRIKQLATNGVVTNAQGSPNKLAYNGNA</sequence>
<reference key="1">
    <citation type="journal article" date="2008" name="PLoS Genet.">
        <title>Genomic islands in the pathogenic filamentous fungus Aspergillus fumigatus.</title>
        <authorList>
            <person name="Fedorova N.D."/>
            <person name="Khaldi N."/>
            <person name="Joardar V.S."/>
            <person name="Maiti R."/>
            <person name="Amedeo P."/>
            <person name="Anderson M.J."/>
            <person name="Crabtree J."/>
            <person name="Silva J.C."/>
            <person name="Badger J.H."/>
            <person name="Albarraq A."/>
            <person name="Angiuoli S."/>
            <person name="Bussey H."/>
            <person name="Bowyer P."/>
            <person name="Cotty P.J."/>
            <person name="Dyer P.S."/>
            <person name="Egan A."/>
            <person name="Galens K."/>
            <person name="Fraser-Liggett C.M."/>
            <person name="Haas B.J."/>
            <person name="Inman J.M."/>
            <person name="Kent R."/>
            <person name="Lemieux S."/>
            <person name="Malavazi I."/>
            <person name="Orvis J."/>
            <person name="Roemer T."/>
            <person name="Ronning C.M."/>
            <person name="Sundaram J.P."/>
            <person name="Sutton G."/>
            <person name="Turner G."/>
            <person name="Venter J.C."/>
            <person name="White O.R."/>
            <person name="Whitty B.R."/>
            <person name="Youngman P."/>
            <person name="Wolfe K.H."/>
            <person name="Goldman G.H."/>
            <person name="Wortman J.R."/>
            <person name="Jiang B."/>
            <person name="Denning D.W."/>
            <person name="Nierman W.C."/>
        </authorList>
    </citation>
    <scope>NUCLEOTIDE SEQUENCE [LARGE SCALE GENOMIC DNA]</scope>
    <source>
        <strain>ATCC 1020 / DSM 3700 / CBS 544.65 / FGSC A1164 / JCM 1740 / NRRL 181 / WB 181</strain>
    </source>
</reference>
<keyword id="KW-0325">Glycoprotein</keyword>
<keyword id="KW-0378">Hydrolase</keyword>
<keyword id="KW-0645">Protease</keyword>
<keyword id="KW-1185">Reference proteome</keyword>
<keyword id="KW-0964">Secreted</keyword>
<keyword id="KW-0720">Serine protease</keyword>
<keyword id="KW-0732">Signal</keyword>
<keyword id="KW-0865">Zymogen</keyword>
<feature type="signal peptide" evidence="2">
    <location>
        <begin position="1"/>
        <end position="21"/>
    </location>
</feature>
<feature type="propeptide" id="PRO_0000407000" evidence="1">
    <location>
        <begin position="22"/>
        <end position="125"/>
    </location>
</feature>
<feature type="chain" id="PRO_0000407001" description="Alkaline protease 1">
    <location>
        <begin position="126"/>
        <end position="403"/>
    </location>
</feature>
<feature type="domain" description="Inhibitor I9" evidence="2">
    <location>
        <begin position="36"/>
        <end position="120"/>
    </location>
</feature>
<feature type="domain" description="Peptidase S8" evidence="3">
    <location>
        <begin position="130"/>
        <end position="403"/>
    </location>
</feature>
<feature type="active site" description="Charge relay system" evidence="3">
    <location>
        <position position="162"/>
    </location>
</feature>
<feature type="active site" description="Charge relay system" evidence="3">
    <location>
        <position position="193"/>
    </location>
</feature>
<feature type="active site" description="Charge relay system" evidence="3">
    <location>
        <position position="349"/>
    </location>
</feature>
<feature type="glycosylation site" description="N-linked (GlcNAc...) asparagine" evidence="2">
    <location>
        <position position="253"/>
    </location>
</feature>
<feature type="glycosylation site" description="N-linked (GlcNAc...) asparagine" evidence="2">
    <location>
        <position position="307"/>
    </location>
</feature>
<accession>A1CWF3</accession>
<name>ORYZ_NEOFI</name>
<protein>
    <recommendedName>
        <fullName>Alkaline protease 1</fullName>
        <shortName>ALP</shortName>
        <ecNumber>3.4.21.63</ecNumber>
    </recommendedName>
    <alternativeName>
        <fullName>Aspergillopeptidase B</fullName>
    </alternativeName>
    <alternativeName>
        <fullName>Aspergillus proteinase B</fullName>
    </alternativeName>
    <alternativeName>
        <fullName>Elastase</fullName>
    </alternativeName>
    <alternativeName>
        <fullName>Elastinolytic serine proteinase</fullName>
    </alternativeName>
    <alternativeName>
        <fullName>Oryzin</fullName>
    </alternativeName>
</protein>